<organism>
    <name type="scientific">Archaeoglobus fulgidus (strain ATCC 49558 / DSM 4304 / JCM 9628 / NBRC 100126 / VC-16)</name>
    <dbReference type="NCBI Taxonomy" id="224325"/>
    <lineage>
        <taxon>Archaea</taxon>
        <taxon>Methanobacteriati</taxon>
        <taxon>Methanobacteriota</taxon>
        <taxon>Archaeoglobi</taxon>
        <taxon>Archaeoglobales</taxon>
        <taxon>Archaeoglobaceae</taxon>
        <taxon>Archaeoglobus</taxon>
    </lineage>
</organism>
<reference key="1">
    <citation type="journal article" date="1997" name="Nature">
        <title>The complete genome sequence of the hyperthermophilic, sulphate-reducing archaeon Archaeoglobus fulgidus.</title>
        <authorList>
            <person name="Klenk H.-P."/>
            <person name="Clayton R.A."/>
            <person name="Tomb J.-F."/>
            <person name="White O."/>
            <person name="Nelson K.E."/>
            <person name="Ketchum K.A."/>
            <person name="Dodson R.J."/>
            <person name="Gwinn M.L."/>
            <person name="Hickey E.K."/>
            <person name="Peterson J.D."/>
            <person name="Richardson D.L."/>
            <person name="Kerlavage A.R."/>
            <person name="Graham D.E."/>
            <person name="Kyrpides N.C."/>
            <person name="Fleischmann R.D."/>
            <person name="Quackenbush J."/>
            <person name="Lee N.H."/>
            <person name="Sutton G.G."/>
            <person name="Gill S.R."/>
            <person name="Kirkness E.F."/>
            <person name="Dougherty B.A."/>
            <person name="McKenney K."/>
            <person name="Adams M.D."/>
            <person name="Loftus B.J."/>
            <person name="Peterson S.N."/>
            <person name="Reich C.I."/>
            <person name="McNeil L.K."/>
            <person name="Badger J.H."/>
            <person name="Glodek A."/>
            <person name="Zhou L."/>
            <person name="Overbeek R."/>
            <person name="Gocayne J.D."/>
            <person name="Weidman J.F."/>
            <person name="McDonald L.A."/>
            <person name="Utterback T.R."/>
            <person name="Cotton M.D."/>
            <person name="Spriggs T."/>
            <person name="Artiach P."/>
            <person name="Kaine B.P."/>
            <person name="Sykes S.M."/>
            <person name="Sadow P.W."/>
            <person name="D'Andrea K.P."/>
            <person name="Bowman C."/>
            <person name="Fujii C."/>
            <person name="Garland S.A."/>
            <person name="Mason T.M."/>
            <person name="Olsen G.J."/>
            <person name="Fraser C.M."/>
            <person name="Smith H.O."/>
            <person name="Woese C.R."/>
            <person name="Venter J.C."/>
        </authorList>
    </citation>
    <scope>NUCLEOTIDE SEQUENCE [LARGE SCALE GENOMIC DNA]</scope>
    <source>
        <strain>ATCC 49558 / DSM 4304 / JCM 9628 / NBRC 100126 / VC-16</strain>
    </source>
</reference>
<reference key="2">
    <citation type="journal article" date="2006" name="Biochim. Biophys. Acta">
        <title>The first archaeal L-aspartate dehydrogenase from the hyperthermophile Archaeoglobus fulgidus: gene cloning and enzymological characterization.</title>
        <authorList>
            <person name="Yoneda K."/>
            <person name="Kawakami R."/>
            <person name="Tagashira Y."/>
            <person name="Sakuraba H."/>
            <person name="Goda S."/>
            <person name="Ohshima T."/>
        </authorList>
    </citation>
    <scope>PROTEIN SEQUENCE OF 1-6</scope>
    <scope>FUNCTION</scope>
    <scope>CATALYTIC ACTIVITY</scope>
    <scope>BIOPHYSICOCHEMICAL PROPERTIES</scope>
    <scope>PATHWAY</scope>
    <scope>SUBUNIT</scope>
</reference>
<reference evidence="7" key="3">
    <citation type="journal article" date="2007" name="FEBS J.">
        <title>Crystal structure of archaeal highly thermostable L-aspartate dehydrogenase/NAD/citrate ternary complex.</title>
        <authorList>
            <person name="Yoneda K."/>
            <person name="Sakuraba H."/>
            <person name="Tsuge H."/>
            <person name="Katunuma N."/>
            <person name="Ohshima T."/>
        </authorList>
    </citation>
    <scope>X-RAY CRYSTALLOGRAPHY (1.90 ANGSTROMS) IN COMPLEX WITH NAD</scope>
    <scope>SUBUNIT</scope>
</reference>
<comment type="function">
    <text evidence="1 2">Specifically catalyzes the NAD or NADP-dependent dehydrogenation of L-aspartate to iminoaspartate.</text>
</comment>
<comment type="catalytic activity">
    <reaction evidence="1 2">
        <text>L-aspartate + NADP(+) + H2O = oxaloacetate + NH4(+) + NADPH + H(+)</text>
        <dbReference type="Rhea" id="RHEA:11784"/>
        <dbReference type="ChEBI" id="CHEBI:15377"/>
        <dbReference type="ChEBI" id="CHEBI:15378"/>
        <dbReference type="ChEBI" id="CHEBI:16452"/>
        <dbReference type="ChEBI" id="CHEBI:28938"/>
        <dbReference type="ChEBI" id="CHEBI:29991"/>
        <dbReference type="ChEBI" id="CHEBI:57783"/>
        <dbReference type="ChEBI" id="CHEBI:58349"/>
        <dbReference type="EC" id="1.4.1.21"/>
    </reaction>
</comment>
<comment type="catalytic activity">
    <reaction evidence="1 2">
        <text>L-aspartate + NAD(+) + H2O = oxaloacetate + NH4(+) + NADH + H(+)</text>
        <dbReference type="Rhea" id="RHEA:11788"/>
        <dbReference type="ChEBI" id="CHEBI:15377"/>
        <dbReference type="ChEBI" id="CHEBI:15378"/>
        <dbReference type="ChEBI" id="CHEBI:16452"/>
        <dbReference type="ChEBI" id="CHEBI:28938"/>
        <dbReference type="ChEBI" id="CHEBI:29991"/>
        <dbReference type="ChEBI" id="CHEBI:57540"/>
        <dbReference type="ChEBI" id="CHEBI:57945"/>
        <dbReference type="EC" id="1.4.1.21"/>
    </reaction>
</comment>
<comment type="biophysicochemical properties">
    <kinetics>
        <KM evidence="2">0.19 mM for L-aspartate (in the presence of NAD)</KM>
        <KM evidence="2">4.3 mM for L-aspartate (in the presence of NADP)</KM>
        <KM evidence="2">0.11 mM for NAD</KM>
        <KM evidence="2">0.32 mM for NADP</KM>
        <KM evidence="2">1.2 mM for oxaloacetate (in the presence of NADH and NH(3))</KM>
        <KM evidence="2">0.014 mM for NADH (in the presence of oxaloacetate and NH(3))</KM>
        <KM evidence="2">167 mM for NH(3) (in the presence of oxaloacetate and NADH)</KM>
    </kinetics>
    <phDependence>
        <text evidence="2">Optimum pH is around 11.6.</text>
    </phDependence>
    <temperatureDependence>
        <text evidence="2">Optimum temperature is 80 degrees Celsius.</text>
    </temperatureDependence>
</comment>
<comment type="pathway">
    <text evidence="1 6">Cofactor biosynthesis; NAD(+) biosynthesis; iminoaspartate from L-aspartate (dehydrogenase route): step 1/1.</text>
</comment>
<comment type="subunit">
    <text evidence="2 3">Homodimer.</text>
</comment>
<comment type="miscellaneous">
    <text evidence="1">The iminoaspartate product is unstable in aqueous solution and can decompose to oxaloacetate and ammonia.</text>
</comment>
<comment type="similarity">
    <text evidence="1">Belongs to the L-aspartate dehydrogenase family.</text>
</comment>
<evidence type="ECO:0000255" key="1">
    <source>
        <dbReference type="HAMAP-Rule" id="MF_01265"/>
    </source>
</evidence>
<evidence type="ECO:0000269" key="2">
    <source>
    </source>
</evidence>
<evidence type="ECO:0000269" key="3">
    <source>
    </source>
</evidence>
<evidence type="ECO:0000303" key="4">
    <source>
    </source>
</evidence>
<evidence type="ECO:0000305" key="5"/>
<evidence type="ECO:0000305" key="6">
    <source>
    </source>
</evidence>
<evidence type="ECO:0007744" key="7">
    <source>
        <dbReference type="PDB" id="2DC1"/>
    </source>
</evidence>
<evidence type="ECO:0007829" key="8">
    <source>
        <dbReference type="PDB" id="2DC1"/>
    </source>
</evidence>
<sequence>MLVGLIGYGAIGKFLAEWLERNGFEIAAILDVRGEHEKMVRGIDEFLQREMDVAVEAASQQAVKDYAEKILKAGIDLIVLSTGAFADRDFLSRVREVCRKTGRRVYIASGAIGGLDAIFSASELIEEIVLTTRKNWRQFGRKGVIFEGSASEAAQKFPKNLNVAATLSIASGKDVKVRLVADEVEENIHEILVRGEFGEMEIRVRNRPMRENPKTSYLAALSVTRILRNLKEGLVV</sequence>
<proteinExistence type="evidence at protein level"/>
<name>ASPD_ARCFU</name>
<dbReference type="EC" id="1.4.1.21" evidence="1"/>
<dbReference type="EMBL" id="AE000782">
    <property type="protein sequence ID" value="AAB89415.1"/>
    <property type="molecule type" value="Genomic_DNA"/>
</dbReference>
<dbReference type="PIR" id="E69479">
    <property type="entry name" value="E69479"/>
</dbReference>
<dbReference type="RefSeq" id="WP_010879332.1">
    <property type="nucleotide sequence ID" value="NC_000917.1"/>
</dbReference>
<dbReference type="PDB" id="2DC1">
    <property type="method" value="X-ray"/>
    <property type="resolution" value="1.90 A"/>
    <property type="chains" value="A/B=1-236"/>
</dbReference>
<dbReference type="PDBsum" id="2DC1"/>
<dbReference type="SMR" id="O28440"/>
<dbReference type="STRING" id="224325.AF_1838"/>
<dbReference type="PaxDb" id="224325-AF_1838"/>
<dbReference type="EnsemblBacteria" id="AAB89415">
    <property type="protein sequence ID" value="AAB89415"/>
    <property type="gene ID" value="AF_1838"/>
</dbReference>
<dbReference type="GeneID" id="24795582"/>
<dbReference type="KEGG" id="afu:AF_1838"/>
<dbReference type="eggNOG" id="arCOG00254">
    <property type="taxonomic scope" value="Archaea"/>
</dbReference>
<dbReference type="HOGENOM" id="CLU_089550_0_0_2"/>
<dbReference type="OrthoDB" id="15415at2157"/>
<dbReference type="PhylomeDB" id="O28440"/>
<dbReference type="BioCyc" id="MetaCyc:MONOMER-21959"/>
<dbReference type="BRENDA" id="1.4.1.21">
    <property type="organism ID" value="414"/>
</dbReference>
<dbReference type="SABIO-RK" id="O28440"/>
<dbReference type="UniPathway" id="UPA00253">
    <property type="reaction ID" value="UER00456"/>
</dbReference>
<dbReference type="EvolutionaryTrace" id="O28440"/>
<dbReference type="Proteomes" id="UP000002199">
    <property type="component" value="Chromosome"/>
</dbReference>
<dbReference type="GO" id="GO:0033735">
    <property type="term" value="F:aspartate dehydrogenase activity"/>
    <property type="evidence" value="ECO:0007669"/>
    <property type="project" value="UniProtKB-EC"/>
</dbReference>
<dbReference type="GO" id="GO:0051287">
    <property type="term" value="F:NAD binding"/>
    <property type="evidence" value="ECO:0007669"/>
    <property type="project" value="UniProtKB-UniRule"/>
</dbReference>
<dbReference type="GO" id="GO:0050661">
    <property type="term" value="F:NADP binding"/>
    <property type="evidence" value="ECO:0007669"/>
    <property type="project" value="UniProtKB-UniRule"/>
</dbReference>
<dbReference type="GO" id="GO:0016639">
    <property type="term" value="F:oxidoreductase activity, acting on the CH-NH2 group of donors, NAD or NADP as acceptor"/>
    <property type="evidence" value="ECO:0007669"/>
    <property type="project" value="UniProtKB-UniRule"/>
</dbReference>
<dbReference type="GO" id="GO:0009435">
    <property type="term" value="P:NAD biosynthetic process"/>
    <property type="evidence" value="ECO:0007669"/>
    <property type="project" value="UniProtKB-UniRule"/>
</dbReference>
<dbReference type="Gene3D" id="3.30.360.10">
    <property type="entry name" value="Dihydrodipicolinate Reductase, domain 2"/>
    <property type="match status" value="1"/>
</dbReference>
<dbReference type="Gene3D" id="3.40.50.720">
    <property type="entry name" value="NAD(P)-binding Rossmann-like Domain"/>
    <property type="match status" value="1"/>
</dbReference>
<dbReference type="HAMAP" id="MF_01265">
    <property type="entry name" value="NadX"/>
    <property type="match status" value="1"/>
</dbReference>
<dbReference type="InterPro" id="IPR005106">
    <property type="entry name" value="Asp/hSer_DH_NAD-bd"/>
</dbReference>
<dbReference type="InterPro" id="IPR002811">
    <property type="entry name" value="Asp_DH"/>
</dbReference>
<dbReference type="InterPro" id="IPR022487">
    <property type="entry name" value="Asp_DH_arc"/>
</dbReference>
<dbReference type="InterPro" id="IPR020626">
    <property type="entry name" value="Asp_DH_prok"/>
</dbReference>
<dbReference type="InterPro" id="IPR011182">
    <property type="entry name" value="L-Asp_DH"/>
</dbReference>
<dbReference type="InterPro" id="IPR036291">
    <property type="entry name" value="NAD(P)-bd_dom_sf"/>
</dbReference>
<dbReference type="NCBIfam" id="TIGR03855">
    <property type="entry name" value="NAD_NadX"/>
    <property type="match status" value="1"/>
</dbReference>
<dbReference type="NCBIfam" id="NF009829">
    <property type="entry name" value="PRK13303.1-4"/>
    <property type="match status" value="1"/>
</dbReference>
<dbReference type="PANTHER" id="PTHR31873:SF6">
    <property type="entry name" value="ASPARTATE DEHYDROGENASE DOMAIN-CONTAINING PROTEIN"/>
    <property type="match status" value="1"/>
</dbReference>
<dbReference type="PANTHER" id="PTHR31873">
    <property type="entry name" value="L-ASPARTATE DEHYDROGENASE-RELATED"/>
    <property type="match status" value="1"/>
</dbReference>
<dbReference type="Pfam" id="PF01958">
    <property type="entry name" value="Asp_DH_C"/>
    <property type="match status" value="1"/>
</dbReference>
<dbReference type="Pfam" id="PF03447">
    <property type="entry name" value="NAD_binding_3"/>
    <property type="match status" value="1"/>
</dbReference>
<dbReference type="PIRSF" id="PIRSF005227">
    <property type="entry name" value="Asp_dh_NAD_syn"/>
    <property type="match status" value="1"/>
</dbReference>
<dbReference type="SUPFAM" id="SSF55347">
    <property type="entry name" value="Glyceraldehyde-3-phosphate dehydrogenase-like, C-terminal domain"/>
    <property type="match status" value="1"/>
</dbReference>
<dbReference type="SUPFAM" id="SSF51735">
    <property type="entry name" value="NAD(P)-binding Rossmann-fold domains"/>
    <property type="match status" value="1"/>
</dbReference>
<protein>
    <recommendedName>
        <fullName evidence="1 5">L-aspartate dehydrogenase</fullName>
        <shortName evidence="4">L-aspDH</shortName>
        <ecNumber evidence="1">1.4.1.21</ecNumber>
    </recommendedName>
</protein>
<keyword id="KW-0002">3D-structure</keyword>
<keyword id="KW-0903">Direct protein sequencing</keyword>
<keyword id="KW-0520">NAD</keyword>
<keyword id="KW-0521">NADP</keyword>
<keyword id="KW-0560">Oxidoreductase</keyword>
<keyword id="KW-0662">Pyridine nucleotide biosynthesis</keyword>
<keyword id="KW-1185">Reference proteome</keyword>
<feature type="chain" id="PRO_0000144894" description="L-aspartate dehydrogenase">
    <location>
        <begin position="1"/>
        <end position="236"/>
    </location>
</feature>
<feature type="active site" evidence="1">
    <location>
        <position position="189"/>
    </location>
</feature>
<feature type="binding site" evidence="3 7">
    <location>
        <begin position="10"/>
        <end position="11"/>
    </location>
    <ligand>
        <name>NAD(+)</name>
        <dbReference type="ChEBI" id="CHEBI:57540"/>
    </ligand>
</feature>
<feature type="binding site" evidence="3 7">
    <location>
        <position position="31"/>
    </location>
    <ligand>
        <name>NAD(+)</name>
        <dbReference type="ChEBI" id="CHEBI:57540"/>
    </ligand>
</feature>
<feature type="binding site" evidence="3 7">
    <location>
        <begin position="58"/>
        <end position="59"/>
    </location>
    <ligand>
        <name>NAD(+)</name>
        <dbReference type="ChEBI" id="CHEBI:57540"/>
    </ligand>
</feature>
<feature type="binding site" evidence="3 7">
    <location>
        <position position="66"/>
    </location>
    <ligand>
        <name>NAD(+)</name>
        <dbReference type="ChEBI" id="CHEBI:57540"/>
    </ligand>
</feature>
<feature type="binding site" evidence="3 7">
    <location>
        <begin position="80"/>
        <end position="81"/>
    </location>
    <ligand>
        <name>NAD(+)</name>
        <dbReference type="ChEBI" id="CHEBI:57540"/>
    </ligand>
</feature>
<feature type="binding site" evidence="1 3 7">
    <location>
        <position position="111"/>
    </location>
    <ligand>
        <name>NAD(+)</name>
        <dbReference type="ChEBI" id="CHEBI:57540"/>
    </ligand>
</feature>
<feature type="binding site" evidence="1 3 7">
    <location>
        <position position="162"/>
    </location>
    <ligand>
        <name>NAD(+)</name>
        <dbReference type="ChEBI" id="CHEBI:57540"/>
    </ligand>
</feature>
<feature type="binding site" evidence="7">
    <location>
        <begin position="212"/>
        <end position="215"/>
    </location>
    <ligand>
        <name>NAD(+)</name>
        <dbReference type="ChEBI" id="CHEBI:57540"/>
    </ligand>
</feature>
<feature type="strand" evidence="8">
    <location>
        <begin position="2"/>
        <end position="6"/>
    </location>
</feature>
<feature type="helix" evidence="8">
    <location>
        <begin position="10"/>
        <end position="21"/>
    </location>
</feature>
<feature type="strand" evidence="8">
    <location>
        <begin position="25"/>
        <end position="30"/>
    </location>
</feature>
<feature type="strand" evidence="8">
    <location>
        <begin position="39"/>
        <end position="42"/>
    </location>
</feature>
<feature type="helix" evidence="8">
    <location>
        <begin position="43"/>
        <end position="46"/>
    </location>
</feature>
<feature type="strand" evidence="8">
    <location>
        <begin position="52"/>
        <end position="56"/>
    </location>
</feature>
<feature type="helix" evidence="8">
    <location>
        <begin position="60"/>
        <end position="72"/>
    </location>
</feature>
<feature type="strand" evidence="8">
    <location>
        <begin position="76"/>
        <end position="80"/>
    </location>
</feature>
<feature type="helix" evidence="8">
    <location>
        <begin position="82"/>
        <end position="86"/>
    </location>
</feature>
<feature type="helix" evidence="8">
    <location>
        <begin position="88"/>
        <end position="101"/>
    </location>
</feature>
<feature type="strand" evidence="8">
    <location>
        <begin position="105"/>
        <end position="107"/>
    </location>
</feature>
<feature type="helix" evidence="8">
    <location>
        <begin position="115"/>
        <end position="120"/>
    </location>
</feature>
<feature type="helix" evidence="8">
    <location>
        <begin position="122"/>
        <end position="124"/>
    </location>
</feature>
<feature type="strand" evidence="8">
    <location>
        <begin position="125"/>
        <end position="135"/>
    </location>
</feature>
<feature type="helix" evidence="8">
    <location>
        <begin position="136"/>
        <end position="138"/>
    </location>
</feature>
<feature type="strand" evidence="8">
    <location>
        <begin position="143"/>
        <end position="149"/>
    </location>
</feature>
<feature type="helix" evidence="8">
    <location>
        <begin position="150"/>
        <end position="156"/>
    </location>
</feature>
<feature type="helix" evidence="8">
    <location>
        <begin position="162"/>
        <end position="171"/>
    </location>
</feature>
<feature type="strand" evidence="8">
    <location>
        <begin position="176"/>
        <end position="183"/>
    </location>
</feature>
<feature type="strand" evidence="8">
    <location>
        <begin position="185"/>
        <end position="195"/>
    </location>
</feature>
<feature type="strand" evidence="8">
    <location>
        <begin position="198"/>
        <end position="206"/>
    </location>
</feature>
<feature type="strand" evidence="8">
    <location>
        <begin position="212"/>
        <end position="216"/>
    </location>
</feature>
<feature type="helix" evidence="8">
    <location>
        <begin position="217"/>
        <end position="231"/>
    </location>
</feature>
<feature type="strand" evidence="8">
    <location>
        <begin position="232"/>
        <end position="235"/>
    </location>
</feature>
<accession>O28440</accession>
<gene>
    <name evidence="1" type="primary">nadX</name>
    <name type="ordered locus">AF_1838</name>
</gene>